<gene>
    <name evidence="1" type="primary">surE</name>
    <name type="ordered locus">PP_1620</name>
</gene>
<protein>
    <recommendedName>
        <fullName evidence="1">5'-nucleotidase SurE</fullName>
        <ecNumber evidence="1">3.1.3.5</ecNumber>
    </recommendedName>
    <alternativeName>
        <fullName evidence="1">Nucleoside 5'-monophosphate phosphohydrolase</fullName>
    </alternativeName>
</protein>
<evidence type="ECO:0000255" key="1">
    <source>
        <dbReference type="HAMAP-Rule" id="MF_00060"/>
    </source>
</evidence>
<comment type="function">
    <text evidence="1">Nucleotidase that shows phosphatase activity on nucleoside 5'-monophosphates.</text>
</comment>
<comment type="catalytic activity">
    <reaction evidence="1">
        <text>a ribonucleoside 5'-phosphate + H2O = a ribonucleoside + phosphate</text>
        <dbReference type="Rhea" id="RHEA:12484"/>
        <dbReference type="ChEBI" id="CHEBI:15377"/>
        <dbReference type="ChEBI" id="CHEBI:18254"/>
        <dbReference type="ChEBI" id="CHEBI:43474"/>
        <dbReference type="ChEBI" id="CHEBI:58043"/>
        <dbReference type="EC" id="3.1.3.5"/>
    </reaction>
</comment>
<comment type="cofactor">
    <cofactor evidence="1">
        <name>a divalent metal cation</name>
        <dbReference type="ChEBI" id="CHEBI:60240"/>
    </cofactor>
    <text evidence="1">Binds 1 divalent metal cation per subunit.</text>
</comment>
<comment type="subcellular location">
    <subcellularLocation>
        <location evidence="1">Cytoplasm</location>
    </subcellularLocation>
</comment>
<comment type="similarity">
    <text evidence="1">Belongs to the SurE nucleotidase family.</text>
</comment>
<reference key="1">
    <citation type="journal article" date="2002" name="Environ. Microbiol.">
        <title>Complete genome sequence and comparative analysis of the metabolically versatile Pseudomonas putida KT2440.</title>
        <authorList>
            <person name="Nelson K.E."/>
            <person name="Weinel C."/>
            <person name="Paulsen I.T."/>
            <person name="Dodson R.J."/>
            <person name="Hilbert H."/>
            <person name="Martins dos Santos V.A.P."/>
            <person name="Fouts D.E."/>
            <person name="Gill S.R."/>
            <person name="Pop M."/>
            <person name="Holmes M."/>
            <person name="Brinkac L.M."/>
            <person name="Beanan M.J."/>
            <person name="DeBoy R.T."/>
            <person name="Daugherty S.C."/>
            <person name="Kolonay J.F."/>
            <person name="Madupu R."/>
            <person name="Nelson W.C."/>
            <person name="White O."/>
            <person name="Peterson J.D."/>
            <person name="Khouri H.M."/>
            <person name="Hance I."/>
            <person name="Chris Lee P."/>
            <person name="Holtzapple E.K."/>
            <person name="Scanlan D."/>
            <person name="Tran K."/>
            <person name="Moazzez A."/>
            <person name="Utterback T.R."/>
            <person name="Rizzo M."/>
            <person name="Lee K."/>
            <person name="Kosack D."/>
            <person name="Moestl D."/>
            <person name="Wedler H."/>
            <person name="Lauber J."/>
            <person name="Stjepandic D."/>
            <person name="Hoheisel J."/>
            <person name="Straetz M."/>
            <person name="Heim S."/>
            <person name="Kiewitz C."/>
            <person name="Eisen J.A."/>
            <person name="Timmis K.N."/>
            <person name="Duesterhoeft A."/>
            <person name="Tuemmler B."/>
            <person name="Fraser C.M."/>
        </authorList>
    </citation>
    <scope>NUCLEOTIDE SEQUENCE [LARGE SCALE GENOMIC DNA]</scope>
    <source>
        <strain>ATCC 47054 / DSM 6125 / CFBP 8728 / NCIMB 11950 / KT2440</strain>
    </source>
</reference>
<organism>
    <name type="scientific">Pseudomonas putida (strain ATCC 47054 / DSM 6125 / CFBP 8728 / NCIMB 11950 / KT2440)</name>
    <dbReference type="NCBI Taxonomy" id="160488"/>
    <lineage>
        <taxon>Bacteria</taxon>
        <taxon>Pseudomonadati</taxon>
        <taxon>Pseudomonadota</taxon>
        <taxon>Gammaproteobacteria</taxon>
        <taxon>Pseudomonadales</taxon>
        <taxon>Pseudomonadaceae</taxon>
        <taxon>Pseudomonas</taxon>
    </lineage>
</organism>
<feature type="chain" id="PRO_0000111832" description="5'-nucleotidase SurE">
    <location>
        <begin position="1"/>
        <end position="249"/>
    </location>
</feature>
<feature type="binding site" evidence="1">
    <location>
        <position position="8"/>
    </location>
    <ligand>
        <name>a divalent metal cation</name>
        <dbReference type="ChEBI" id="CHEBI:60240"/>
    </ligand>
</feature>
<feature type="binding site" evidence="1">
    <location>
        <position position="9"/>
    </location>
    <ligand>
        <name>a divalent metal cation</name>
        <dbReference type="ChEBI" id="CHEBI:60240"/>
    </ligand>
</feature>
<feature type="binding site" evidence="1">
    <location>
        <position position="39"/>
    </location>
    <ligand>
        <name>a divalent metal cation</name>
        <dbReference type="ChEBI" id="CHEBI:60240"/>
    </ligand>
</feature>
<feature type="binding site" evidence="1">
    <location>
        <position position="91"/>
    </location>
    <ligand>
        <name>a divalent metal cation</name>
        <dbReference type="ChEBI" id="CHEBI:60240"/>
    </ligand>
</feature>
<sequence>MRILISNDDGVTAPGIAALHAALADYAECAVIAPDQDKSGASSSLTLDRPLHPQTLANGFISLNGTPTDCVHLGLNGLLPQMPDMVVSGINLGANLGDDVLYSGTVAAALEGRFLGGTSLAFSLLSRQPDNLPTAAYIARRLVEAQSRLVLPPRTVLNVNIPNLPLEHIRGIQLTRLGHRARAAAPTKVVNPRGKEGYWIAVAGDAEDGGPGTDFHAVMQGYVSITPLQLDRTFNDAFEQLDGWLEGLL</sequence>
<dbReference type="EC" id="3.1.3.5" evidence="1"/>
<dbReference type="EMBL" id="AE015451">
    <property type="protein sequence ID" value="AAN67241.1"/>
    <property type="molecule type" value="Genomic_DNA"/>
</dbReference>
<dbReference type="RefSeq" id="NP_743777.1">
    <property type="nucleotide sequence ID" value="NC_002947.4"/>
</dbReference>
<dbReference type="RefSeq" id="WP_010952690.1">
    <property type="nucleotide sequence ID" value="NZ_CP169744.1"/>
</dbReference>
<dbReference type="SMR" id="Q88MF1"/>
<dbReference type="STRING" id="160488.PP_1620"/>
<dbReference type="PaxDb" id="160488-PP_1620"/>
<dbReference type="GeneID" id="83681901"/>
<dbReference type="KEGG" id="ppu:PP_1620"/>
<dbReference type="PATRIC" id="fig|160488.4.peg.1711"/>
<dbReference type="eggNOG" id="COG0496">
    <property type="taxonomic scope" value="Bacteria"/>
</dbReference>
<dbReference type="HOGENOM" id="CLU_045192_1_2_6"/>
<dbReference type="OrthoDB" id="9780815at2"/>
<dbReference type="PhylomeDB" id="Q88MF1"/>
<dbReference type="BioCyc" id="PPUT160488:G1G01-1717-MONOMER"/>
<dbReference type="Proteomes" id="UP000000556">
    <property type="component" value="Chromosome"/>
</dbReference>
<dbReference type="GO" id="GO:0005737">
    <property type="term" value="C:cytoplasm"/>
    <property type="evidence" value="ECO:0007669"/>
    <property type="project" value="UniProtKB-SubCell"/>
</dbReference>
<dbReference type="GO" id="GO:0008254">
    <property type="term" value="F:3'-nucleotidase activity"/>
    <property type="evidence" value="ECO:0007669"/>
    <property type="project" value="TreeGrafter"/>
</dbReference>
<dbReference type="GO" id="GO:0008253">
    <property type="term" value="F:5'-nucleotidase activity"/>
    <property type="evidence" value="ECO:0007669"/>
    <property type="project" value="UniProtKB-UniRule"/>
</dbReference>
<dbReference type="GO" id="GO:0004309">
    <property type="term" value="F:exopolyphosphatase activity"/>
    <property type="evidence" value="ECO:0007669"/>
    <property type="project" value="TreeGrafter"/>
</dbReference>
<dbReference type="GO" id="GO:0046872">
    <property type="term" value="F:metal ion binding"/>
    <property type="evidence" value="ECO:0007669"/>
    <property type="project" value="UniProtKB-UniRule"/>
</dbReference>
<dbReference type="GO" id="GO:0000166">
    <property type="term" value="F:nucleotide binding"/>
    <property type="evidence" value="ECO:0007669"/>
    <property type="project" value="UniProtKB-KW"/>
</dbReference>
<dbReference type="FunFam" id="3.40.1210.10:FF:000001">
    <property type="entry name" value="5'/3'-nucleotidase SurE"/>
    <property type="match status" value="1"/>
</dbReference>
<dbReference type="Gene3D" id="3.40.1210.10">
    <property type="entry name" value="Survival protein SurE-like phosphatase/nucleotidase"/>
    <property type="match status" value="1"/>
</dbReference>
<dbReference type="HAMAP" id="MF_00060">
    <property type="entry name" value="SurE"/>
    <property type="match status" value="1"/>
</dbReference>
<dbReference type="InterPro" id="IPR030048">
    <property type="entry name" value="SurE"/>
</dbReference>
<dbReference type="InterPro" id="IPR002828">
    <property type="entry name" value="SurE-like_Pase/nucleotidase"/>
</dbReference>
<dbReference type="InterPro" id="IPR036523">
    <property type="entry name" value="SurE-like_sf"/>
</dbReference>
<dbReference type="NCBIfam" id="NF001489">
    <property type="entry name" value="PRK00346.1-3"/>
    <property type="match status" value="1"/>
</dbReference>
<dbReference type="NCBIfam" id="NF001490">
    <property type="entry name" value="PRK00346.1-4"/>
    <property type="match status" value="1"/>
</dbReference>
<dbReference type="NCBIfam" id="TIGR00087">
    <property type="entry name" value="surE"/>
    <property type="match status" value="1"/>
</dbReference>
<dbReference type="PANTHER" id="PTHR30457">
    <property type="entry name" value="5'-NUCLEOTIDASE SURE"/>
    <property type="match status" value="1"/>
</dbReference>
<dbReference type="PANTHER" id="PTHR30457:SF12">
    <property type="entry name" value="5'_3'-NUCLEOTIDASE SURE"/>
    <property type="match status" value="1"/>
</dbReference>
<dbReference type="Pfam" id="PF01975">
    <property type="entry name" value="SurE"/>
    <property type="match status" value="1"/>
</dbReference>
<dbReference type="SUPFAM" id="SSF64167">
    <property type="entry name" value="SurE-like"/>
    <property type="match status" value="1"/>
</dbReference>
<keyword id="KW-0963">Cytoplasm</keyword>
<keyword id="KW-0378">Hydrolase</keyword>
<keyword id="KW-0479">Metal-binding</keyword>
<keyword id="KW-0547">Nucleotide-binding</keyword>
<keyword id="KW-1185">Reference proteome</keyword>
<proteinExistence type="inferred from homology"/>
<accession>Q88MF1</accession>
<name>SURE_PSEPK</name>